<reference key="1">
    <citation type="journal article" date="2009" name="PLoS Genet.">
        <title>Organised genome dynamics in the Escherichia coli species results in highly diverse adaptive paths.</title>
        <authorList>
            <person name="Touchon M."/>
            <person name="Hoede C."/>
            <person name="Tenaillon O."/>
            <person name="Barbe V."/>
            <person name="Baeriswyl S."/>
            <person name="Bidet P."/>
            <person name="Bingen E."/>
            <person name="Bonacorsi S."/>
            <person name="Bouchier C."/>
            <person name="Bouvet O."/>
            <person name="Calteau A."/>
            <person name="Chiapello H."/>
            <person name="Clermont O."/>
            <person name="Cruveiller S."/>
            <person name="Danchin A."/>
            <person name="Diard M."/>
            <person name="Dossat C."/>
            <person name="Karoui M.E."/>
            <person name="Frapy E."/>
            <person name="Garry L."/>
            <person name="Ghigo J.M."/>
            <person name="Gilles A.M."/>
            <person name="Johnson J."/>
            <person name="Le Bouguenec C."/>
            <person name="Lescat M."/>
            <person name="Mangenot S."/>
            <person name="Martinez-Jehanne V."/>
            <person name="Matic I."/>
            <person name="Nassif X."/>
            <person name="Oztas S."/>
            <person name="Petit M.A."/>
            <person name="Pichon C."/>
            <person name="Rouy Z."/>
            <person name="Ruf C.S."/>
            <person name="Schneider D."/>
            <person name="Tourret J."/>
            <person name="Vacherie B."/>
            <person name="Vallenet D."/>
            <person name="Medigue C."/>
            <person name="Rocha E.P.C."/>
            <person name="Denamur E."/>
        </authorList>
    </citation>
    <scope>NUCLEOTIDE SEQUENCE [LARGE SCALE GENOMIC DNA]</scope>
    <source>
        <strain>ATCC 35469 / DSM 13698 / BCRC 15582 / CCUG 18766 / IAM 14443 / JCM 21226 / LMG 7866 / NBRC 102419 / NCTC 12128 / CDC 0568-73</strain>
    </source>
</reference>
<accession>B7LKC1</accession>
<protein>
    <recommendedName>
        <fullName evidence="1">Dual-specificity RNA methyltransferase RlmN</fullName>
        <ecNumber evidence="1">2.1.1.192</ecNumber>
    </recommendedName>
    <alternativeName>
        <fullName evidence="1">23S rRNA (adenine(2503)-C(2))-methyltransferase</fullName>
    </alternativeName>
    <alternativeName>
        <fullName evidence="1">23S rRNA m2A2503 methyltransferase</fullName>
    </alternativeName>
    <alternativeName>
        <fullName evidence="1">Ribosomal RNA large subunit methyltransferase N</fullName>
    </alternativeName>
    <alternativeName>
        <fullName evidence="1">tRNA (adenine(37)-C(2))-methyltransferase</fullName>
    </alternativeName>
    <alternativeName>
        <fullName evidence="1">tRNA m2A37 methyltransferase</fullName>
    </alternativeName>
</protein>
<keyword id="KW-0004">4Fe-4S</keyword>
<keyword id="KW-0963">Cytoplasm</keyword>
<keyword id="KW-1015">Disulfide bond</keyword>
<keyword id="KW-0408">Iron</keyword>
<keyword id="KW-0411">Iron-sulfur</keyword>
<keyword id="KW-0479">Metal-binding</keyword>
<keyword id="KW-0489">Methyltransferase</keyword>
<keyword id="KW-0698">rRNA processing</keyword>
<keyword id="KW-0949">S-adenosyl-L-methionine</keyword>
<keyword id="KW-0808">Transferase</keyword>
<keyword id="KW-0819">tRNA processing</keyword>
<comment type="function">
    <text evidence="1">Specifically methylates position 2 of adenine 2503 in 23S rRNA and position 2 of adenine 37 in tRNAs. m2A2503 modification seems to play a crucial role in the proofreading step occurring at the peptidyl transferase center and thus would serve to optimize ribosomal fidelity.</text>
</comment>
<comment type="catalytic activity">
    <reaction evidence="1">
        <text>adenosine(2503) in 23S rRNA + 2 reduced [2Fe-2S]-[ferredoxin] + 2 S-adenosyl-L-methionine = 2-methyladenosine(2503) in 23S rRNA + 5'-deoxyadenosine + L-methionine + 2 oxidized [2Fe-2S]-[ferredoxin] + S-adenosyl-L-homocysteine</text>
        <dbReference type="Rhea" id="RHEA:42916"/>
        <dbReference type="Rhea" id="RHEA-COMP:10000"/>
        <dbReference type="Rhea" id="RHEA-COMP:10001"/>
        <dbReference type="Rhea" id="RHEA-COMP:10152"/>
        <dbReference type="Rhea" id="RHEA-COMP:10282"/>
        <dbReference type="ChEBI" id="CHEBI:17319"/>
        <dbReference type="ChEBI" id="CHEBI:33737"/>
        <dbReference type="ChEBI" id="CHEBI:33738"/>
        <dbReference type="ChEBI" id="CHEBI:57844"/>
        <dbReference type="ChEBI" id="CHEBI:57856"/>
        <dbReference type="ChEBI" id="CHEBI:59789"/>
        <dbReference type="ChEBI" id="CHEBI:74411"/>
        <dbReference type="ChEBI" id="CHEBI:74497"/>
        <dbReference type="EC" id="2.1.1.192"/>
    </reaction>
</comment>
<comment type="catalytic activity">
    <reaction evidence="1">
        <text>adenosine(37) in tRNA + 2 reduced [2Fe-2S]-[ferredoxin] + 2 S-adenosyl-L-methionine = 2-methyladenosine(37) in tRNA + 5'-deoxyadenosine + L-methionine + 2 oxidized [2Fe-2S]-[ferredoxin] + S-adenosyl-L-homocysteine</text>
        <dbReference type="Rhea" id="RHEA:43332"/>
        <dbReference type="Rhea" id="RHEA-COMP:10000"/>
        <dbReference type="Rhea" id="RHEA-COMP:10001"/>
        <dbReference type="Rhea" id="RHEA-COMP:10162"/>
        <dbReference type="Rhea" id="RHEA-COMP:10485"/>
        <dbReference type="ChEBI" id="CHEBI:17319"/>
        <dbReference type="ChEBI" id="CHEBI:33737"/>
        <dbReference type="ChEBI" id="CHEBI:33738"/>
        <dbReference type="ChEBI" id="CHEBI:57844"/>
        <dbReference type="ChEBI" id="CHEBI:57856"/>
        <dbReference type="ChEBI" id="CHEBI:59789"/>
        <dbReference type="ChEBI" id="CHEBI:74411"/>
        <dbReference type="ChEBI" id="CHEBI:74497"/>
        <dbReference type="EC" id="2.1.1.192"/>
    </reaction>
</comment>
<comment type="cofactor">
    <cofactor evidence="1">
        <name>[4Fe-4S] cluster</name>
        <dbReference type="ChEBI" id="CHEBI:49883"/>
    </cofactor>
    <text evidence="1">Binds 1 [4Fe-4S] cluster. The cluster is coordinated with 3 cysteines and an exchangeable S-adenosyl-L-methionine.</text>
</comment>
<comment type="subcellular location">
    <subcellularLocation>
        <location evidence="1">Cytoplasm</location>
    </subcellularLocation>
</comment>
<comment type="miscellaneous">
    <text evidence="1">Reaction proceeds by a ping-pong mechanism involving intermediate methylation of a conserved cysteine residue.</text>
</comment>
<comment type="similarity">
    <text evidence="1">Belongs to the radical SAM superfamily. RlmN family.</text>
</comment>
<gene>
    <name evidence="1" type="primary">rlmN</name>
    <name type="ordered locus">EFER_0655</name>
</gene>
<proteinExistence type="inferred from homology"/>
<feature type="chain" id="PRO_1000188578" description="Dual-specificity RNA methyltransferase RlmN">
    <location>
        <begin position="1"/>
        <end position="384"/>
    </location>
</feature>
<feature type="domain" description="Radical SAM core" evidence="2">
    <location>
        <begin position="111"/>
        <end position="350"/>
    </location>
</feature>
<feature type="active site" description="Proton acceptor" evidence="1">
    <location>
        <position position="105"/>
    </location>
</feature>
<feature type="active site" description="S-methylcysteine intermediate" evidence="1">
    <location>
        <position position="355"/>
    </location>
</feature>
<feature type="binding site" evidence="1">
    <location>
        <position position="125"/>
    </location>
    <ligand>
        <name>[4Fe-4S] cluster</name>
        <dbReference type="ChEBI" id="CHEBI:49883"/>
        <note>4Fe-4S-S-AdoMet</note>
    </ligand>
</feature>
<feature type="binding site" evidence="1">
    <location>
        <position position="129"/>
    </location>
    <ligand>
        <name>[4Fe-4S] cluster</name>
        <dbReference type="ChEBI" id="CHEBI:49883"/>
        <note>4Fe-4S-S-AdoMet</note>
    </ligand>
</feature>
<feature type="binding site" evidence="1">
    <location>
        <position position="132"/>
    </location>
    <ligand>
        <name>[4Fe-4S] cluster</name>
        <dbReference type="ChEBI" id="CHEBI:49883"/>
        <note>4Fe-4S-S-AdoMet</note>
    </ligand>
</feature>
<feature type="binding site" evidence="1">
    <location>
        <begin position="179"/>
        <end position="180"/>
    </location>
    <ligand>
        <name>S-adenosyl-L-methionine</name>
        <dbReference type="ChEBI" id="CHEBI:59789"/>
    </ligand>
</feature>
<feature type="binding site" evidence="1">
    <location>
        <position position="211"/>
    </location>
    <ligand>
        <name>S-adenosyl-L-methionine</name>
        <dbReference type="ChEBI" id="CHEBI:59789"/>
    </ligand>
</feature>
<feature type="binding site" evidence="1">
    <location>
        <begin position="233"/>
        <end position="235"/>
    </location>
    <ligand>
        <name>S-adenosyl-L-methionine</name>
        <dbReference type="ChEBI" id="CHEBI:59789"/>
    </ligand>
</feature>
<feature type="binding site" evidence="1">
    <location>
        <position position="312"/>
    </location>
    <ligand>
        <name>S-adenosyl-L-methionine</name>
        <dbReference type="ChEBI" id="CHEBI:59789"/>
    </ligand>
</feature>
<feature type="disulfide bond" description="(transient)" evidence="1">
    <location>
        <begin position="118"/>
        <end position="355"/>
    </location>
</feature>
<name>RLMN_ESCF3</name>
<evidence type="ECO:0000255" key="1">
    <source>
        <dbReference type="HAMAP-Rule" id="MF_01849"/>
    </source>
</evidence>
<evidence type="ECO:0000255" key="2">
    <source>
        <dbReference type="PROSITE-ProRule" id="PRU01266"/>
    </source>
</evidence>
<sequence>MSEQLVTPENVTTKDGKINLLDLNRQQMREFFKDLGEKPFRADQVMKWMYHYCCDNFDEMTDINKVLRGKLKEVAEIRAPEVVEEQRSSDGTIKWAIAVGDQRVETVYIPEDDRATLCVSSQVGCALECKFCSTAQQGFNRNLRVSEIIGQVWRAAKIVGAAKVTGQRPITNVVMMGMGEPLLNLNNVVPAMEIMLDDFGFGLSKRRVTLSTSGVVPALDKLGDMIDVALAISLHAPNDEIRDEIVPINKKYNIETFLAAVRRYLEKSNANQGRVTIEYVMLDHVNDGTEHAHQLAELLKDTPCKINLIPWNPFPGAPYGRSSNSRIDRFSKVLMSYGFTTIVRKTRGDDIDAACGQLAGDVIDRTKRTLRKRMQGEAIDVRSV</sequence>
<organism>
    <name type="scientific">Escherichia fergusonii (strain ATCC 35469 / DSM 13698 / CCUG 18766 / IAM 14443 / JCM 21226 / LMG 7866 / NBRC 102419 / NCTC 12128 / CDC 0568-73)</name>
    <dbReference type="NCBI Taxonomy" id="585054"/>
    <lineage>
        <taxon>Bacteria</taxon>
        <taxon>Pseudomonadati</taxon>
        <taxon>Pseudomonadota</taxon>
        <taxon>Gammaproteobacteria</taxon>
        <taxon>Enterobacterales</taxon>
        <taxon>Enterobacteriaceae</taxon>
        <taxon>Escherichia</taxon>
    </lineage>
</organism>
<dbReference type="EC" id="2.1.1.192" evidence="1"/>
<dbReference type="EMBL" id="CU928158">
    <property type="protein sequence ID" value="CAQ88198.1"/>
    <property type="molecule type" value="Genomic_DNA"/>
</dbReference>
<dbReference type="RefSeq" id="WP_000003319.1">
    <property type="nucleotide sequence ID" value="NC_011740.1"/>
</dbReference>
<dbReference type="SMR" id="B7LKC1"/>
<dbReference type="KEGG" id="efe:EFER_0655"/>
<dbReference type="HOGENOM" id="CLU_029101_0_0_6"/>
<dbReference type="OrthoDB" id="9793973at2"/>
<dbReference type="Proteomes" id="UP000000745">
    <property type="component" value="Chromosome"/>
</dbReference>
<dbReference type="GO" id="GO:0005737">
    <property type="term" value="C:cytoplasm"/>
    <property type="evidence" value="ECO:0007669"/>
    <property type="project" value="UniProtKB-SubCell"/>
</dbReference>
<dbReference type="GO" id="GO:0051539">
    <property type="term" value="F:4 iron, 4 sulfur cluster binding"/>
    <property type="evidence" value="ECO:0007669"/>
    <property type="project" value="UniProtKB-UniRule"/>
</dbReference>
<dbReference type="GO" id="GO:0046872">
    <property type="term" value="F:metal ion binding"/>
    <property type="evidence" value="ECO:0007669"/>
    <property type="project" value="UniProtKB-KW"/>
</dbReference>
<dbReference type="GO" id="GO:0070040">
    <property type="term" value="F:rRNA (adenine(2503)-C2-)-methyltransferase activity"/>
    <property type="evidence" value="ECO:0007669"/>
    <property type="project" value="UniProtKB-UniRule"/>
</dbReference>
<dbReference type="GO" id="GO:0019843">
    <property type="term" value="F:rRNA binding"/>
    <property type="evidence" value="ECO:0007669"/>
    <property type="project" value="UniProtKB-UniRule"/>
</dbReference>
<dbReference type="GO" id="GO:0002935">
    <property type="term" value="F:tRNA (adenine(37)-C2)-methyltransferase activity"/>
    <property type="evidence" value="ECO:0007669"/>
    <property type="project" value="UniProtKB-UniRule"/>
</dbReference>
<dbReference type="GO" id="GO:0000049">
    <property type="term" value="F:tRNA binding"/>
    <property type="evidence" value="ECO:0007669"/>
    <property type="project" value="UniProtKB-UniRule"/>
</dbReference>
<dbReference type="GO" id="GO:0070475">
    <property type="term" value="P:rRNA base methylation"/>
    <property type="evidence" value="ECO:0007669"/>
    <property type="project" value="UniProtKB-UniRule"/>
</dbReference>
<dbReference type="GO" id="GO:0030488">
    <property type="term" value="P:tRNA methylation"/>
    <property type="evidence" value="ECO:0007669"/>
    <property type="project" value="UniProtKB-UniRule"/>
</dbReference>
<dbReference type="CDD" id="cd01335">
    <property type="entry name" value="Radical_SAM"/>
    <property type="match status" value="1"/>
</dbReference>
<dbReference type="FunFam" id="1.10.150.530:FF:000001">
    <property type="entry name" value="Dual-specificity RNA methyltransferase RlmN"/>
    <property type="match status" value="1"/>
</dbReference>
<dbReference type="FunFam" id="3.20.20.70:FF:000008">
    <property type="entry name" value="Dual-specificity RNA methyltransferase RlmN"/>
    <property type="match status" value="1"/>
</dbReference>
<dbReference type="Gene3D" id="1.10.150.530">
    <property type="match status" value="1"/>
</dbReference>
<dbReference type="Gene3D" id="3.20.20.70">
    <property type="entry name" value="Aldolase class I"/>
    <property type="match status" value="1"/>
</dbReference>
<dbReference type="HAMAP" id="MF_01849">
    <property type="entry name" value="RNA_methyltr_RlmN"/>
    <property type="match status" value="1"/>
</dbReference>
<dbReference type="InterPro" id="IPR013785">
    <property type="entry name" value="Aldolase_TIM"/>
</dbReference>
<dbReference type="InterPro" id="IPR040072">
    <property type="entry name" value="Methyltransferase_A"/>
</dbReference>
<dbReference type="InterPro" id="IPR048641">
    <property type="entry name" value="RlmN_N"/>
</dbReference>
<dbReference type="InterPro" id="IPR027492">
    <property type="entry name" value="RNA_MTrfase_RlmN"/>
</dbReference>
<dbReference type="InterPro" id="IPR004383">
    <property type="entry name" value="rRNA_lsu_MTrfase_RlmN/Cfr"/>
</dbReference>
<dbReference type="InterPro" id="IPR007197">
    <property type="entry name" value="rSAM"/>
</dbReference>
<dbReference type="NCBIfam" id="NF008396">
    <property type="entry name" value="PRK11194.1"/>
    <property type="match status" value="1"/>
</dbReference>
<dbReference type="NCBIfam" id="TIGR00048">
    <property type="entry name" value="rRNA_mod_RlmN"/>
    <property type="match status" value="1"/>
</dbReference>
<dbReference type="PANTHER" id="PTHR30544">
    <property type="entry name" value="23S RRNA METHYLTRANSFERASE"/>
    <property type="match status" value="1"/>
</dbReference>
<dbReference type="PANTHER" id="PTHR30544:SF5">
    <property type="entry name" value="RADICAL SAM CORE DOMAIN-CONTAINING PROTEIN"/>
    <property type="match status" value="1"/>
</dbReference>
<dbReference type="Pfam" id="PF04055">
    <property type="entry name" value="Radical_SAM"/>
    <property type="match status" value="1"/>
</dbReference>
<dbReference type="Pfam" id="PF21016">
    <property type="entry name" value="RlmN_N"/>
    <property type="match status" value="1"/>
</dbReference>
<dbReference type="PIRSF" id="PIRSF006004">
    <property type="entry name" value="CHP00048"/>
    <property type="match status" value="1"/>
</dbReference>
<dbReference type="SFLD" id="SFLDF00275">
    <property type="entry name" value="adenosine_C2_methyltransferase"/>
    <property type="match status" value="1"/>
</dbReference>
<dbReference type="SFLD" id="SFLDS00029">
    <property type="entry name" value="Radical_SAM"/>
    <property type="match status" value="1"/>
</dbReference>
<dbReference type="SUPFAM" id="SSF102114">
    <property type="entry name" value="Radical SAM enzymes"/>
    <property type="match status" value="1"/>
</dbReference>
<dbReference type="PROSITE" id="PS51918">
    <property type="entry name" value="RADICAL_SAM"/>
    <property type="match status" value="1"/>
</dbReference>